<reference key="1">
    <citation type="submission" date="2008-02" db="EMBL/GenBank/DDBJ databases">
        <title>Complete sequence of chromosome of Methylobacterium sp. 4-46.</title>
        <authorList>
            <consortium name="US DOE Joint Genome Institute"/>
            <person name="Copeland A."/>
            <person name="Lucas S."/>
            <person name="Lapidus A."/>
            <person name="Glavina del Rio T."/>
            <person name="Dalin E."/>
            <person name="Tice H."/>
            <person name="Bruce D."/>
            <person name="Goodwin L."/>
            <person name="Pitluck S."/>
            <person name="Chertkov O."/>
            <person name="Brettin T."/>
            <person name="Detter J.C."/>
            <person name="Han C."/>
            <person name="Kuske C.R."/>
            <person name="Schmutz J."/>
            <person name="Larimer F."/>
            <person name="Land M."/>
            <person name="Hauser L."/>
            <person name="Kyrpides N."/>
            <person name="Ivanova N."/>
            <person name="Marx C.J."/>
            <person name="Richardson P."/>
        </authorList>
    </citation>
    <scope>NUCLEOTIDE SEQUENCE [LARGE SCALE GENOMIC DNA]</scope>
    <source>
        <strain>4-46</strain>
    </source>
</reference>
<dbReference type="EC" id="2.1.1.192" evidence="1"/>
<dbReference type="EMBL" id="CP000943">
    <property type="protein sequence ID" value="ACA18897.1"/>
    <property type="molecule type" value="Genomic_DNA"/>
</dbReference>
<dbReference type="RefSeq" id="WP_012334286.1">
    <property type="nucleotide sequence ID" value="NC_010511.1"/>
</dbReference>
<dbReference type="SMR" id="B0UQR1"/>
<dbReference type="STRING" id="426117.M446_4556"/>
<dbReference type="KEGG" id="met:M446_4556"/>
<dbReference type="eggNOG" id="COG0820">
    <property type="taxonomic scope" value="Bacteria"/>
</dbReference>
<dbReference type="HOGENOM" id="CLU_029101_0_0_5"/>
<dbReference type="GO" id="GO:0005737">
    <property type="term" value="C:cytoplasm"/>
    <property type="evidence" value="ECO:0007669"/>
    <property type="project" value="UniProtKB-SubCell"/>
</dbReference>
<dbReference type="GO" id="GO:0051539">
    <property type="term" value="F:4 iron, 4 sulfur cluster binding"/>
    <property type="evidence" value="ECO:0007669"/>
    <property type="project" value="UniProtKB-UniRule"/>
</dbReference>
<dbReference type="GO" id="GO:0046872">
    <property type="term" value="F:metal ion binding"/>
    <property type="evidence" value="ECO:0007669"/>
    <property type="project" value="UniProtKB-KW"/>
</dbReference>
<dbReference type="GO" id="GO:0070040">
    <property type="term" value="F:rRNA (adenine(2503)-C2-)-methyltransferase activity"/>
    <property type="evidence" value="ECO:0007669"/>
    <property type="project" value="UniProtKB-UniRule"/>
</dbReference>
<dbReference type="GO" id="GO:0019843">
    <property type="term" value="F:rRNA binding"/>
    <property type="evidence" value="ECO:0007669"/>
    <property type="project" value="UniProtKB-UniRule"/>
</dbReference>
<dbReference type="GO" id="GO:0002935">
    <property type="term" value="F:tRNA (adenine(37)-C2)-methyltransferase activity"/>
    <property type="evidence" value="ECO:0007669"/>
    <property type="project" value="UniProtKB-UniRule"/>
</dbReference>
<dbReference type="GO" id="GO:0000049">
    <property type="term" value="F:tRNA binding"/>
    <property type="evidence" value="ECO:0007669"/>
    <property type="project" value="UniProtKB-UniRule"/>
</dbReference>
<dbReference type="GO" id="GO:0070475">
    <property type="term" value="P:rRNA base methylation"/>
    <property type="evidence" value="ECO:0007669"/>
    <property type="project" value="UniProtKB-UniRule"/>
</dbReference>
<dbReference type="GO" id="GO:0030488">
    <property type="term" value="P:tRNA methylation"/>
    <property type="evidence" value="ECO:0007669"/>
    <property type="project" value="UniProtKB-UniRule"/>
</dbReference>
<dbReference type="CDD" id="cd01335">
    <property type="entry name" value="Radical_SAM"/>
    <property type="match status" value="1"/>
</dbReference>
<dbReference type="FunFam" id="3.20.20.70:FF:000008">
    <property type="entry name" value="Dual-specificity RNA methyltransferase RlmN"/>
    <property type="match status" value="1"/>
</dbReference>
<dbReference type="Gene3D" id="1.10.150.530">
    <property type="match status" value="1"/>
</dbReference>
<dbReference type="Gene3D" id="3.20.20.70">
    <property type="entry name" value="Aldolase class I"/>
    <property type="match status" value="1"/>
</dbReference>
<dbReference type="HAMAP" id="MF_01849">
    <property type="entry name" value="RNA_methyltr_RlmN"/>
    <property type="match status" value="1"/>
</dbReference>
<dbReference type="InterPro" id="IPR013785">
    <property type="entry name" value="Aldolase_TIM"/>
</dbReference>
<dbReference type="InterPro" id="IPR040072">
    <property type="entry name" value="Methyltransferase_A"/>
</dbReference>
<dbReference type="InterPro" id="IPR048641">
    <property type="entry name" value="RlmN_N"/>
</dbReference>
<dbReference type="InterPro" id="IPR027492">
    <property type="entry name" value="RNA_MTrfase_RlmN"/>
</dbReference>
<dbReference type="InterPro" id="IPR004383">
    <property type="entry name" value="rRNA_lsu_MTrfase_RlmN/Cfr"/>
</dbReference>
<dbReference type="InterPro" id="IPR007197">
    <property type="entry name" value="rSAM"/>
</dbReference>
<dbReference type="NCBIfam" id="TIGR00048">
    <property type="entry name" value="rRNA_mod_RlmN"/>
    <property type="match status" value="1"/>
</dbReference>
<dbReference type="PANTHER" id="PTHR30544">
    <property type="entry name" value="23S RRNA METHYLTRANSFERASE"/>
    <property type="match status" value="1"/>
</dbReference>
<dbReference type="PANTHER" id="PTHR30544:SF5">
    <property type="entry name" value="RADICAL SAM CORE DOMAIN-CONTAINING PROTEIN"/>
    <property type="match status" value="1"/>
</dbReference>
<dbReference type="Pfam" id="PF04055">
    <property type="entry name" value="Radical_SAM"/>
    <property type="match status" value="1"/>
</dbReference>
<dbReference type="Pfam" id="PF21016">
    <property type="entry name" value="RlmN_N"/>
    <property type="match status" value="1"/>
</dbReference>
<dbReference type="PIRSF" id="PIRSF006004">
    <property type="entry name" value="CHP00048"/>
    <property type="match status" value="1"/>
</dbReference>
<dbReference type="SFLD" id="SFLDF00275">
    <property type="entry name" value="adenosine_C2_methyltransferase"/>
    <property type="match status" value="1"/>
</dbReference>
<dbReference type="SFLD" id="SFLDG01062">
    <property type="entry name" value="methyltransferase_(Class_A)"/>
    <property type="match status" value="1"/>
</dbReference>
<dbReference type="SUPFAM" id="SSF102114">
    <property type="entry name" value="Radical SAM enzymes"/>
    <property type="match status" value="1"/>
</dbReference>
<dbReference type="PROSITE" id="PS51918">
    <property type="entry name" value="RADICAL_SAM"/>
    <property type="match status" value="1"/>
</dbReference>
<gene>
    <name evidence="1" type="primary">rlmN</name>
    <name type="ordered locus">M446_4556</name>
</gene>
<feature type="chain" id="PRO_0000350256" description="Dual-specificity RNA methyltransferase RlmN">
    <location>
        <begin position="1"/>
        <end position="431"/>
    </location>
</feature>
<feature type="domain" description="Radical SAM core" evidence="2">
    <location>
        <begin position="144"/>
        <end position="394"/>
    </location>
</feature>
<feature type="region of interest" description="Disordered" evidence="3">
    <location>
        <begin position="1"/>
        <end position="26"/>
    </location>
</feature>
<feature type="compositionally biased region" description="Basic and acidic residues" evidence="3">
    <location>
        <begin position="9"/>
        <end position="26"/>
    </location>
</feature>
<feature type="active site" description="Proton acceptor" evidence="1">
    <location>
        <position position="138"/>
    </location>
</feature>
<feature type="active site" description="S-methylcysteine intermediate" evidence="1">
    <location>
        <position position="397"/>
    </location>
</feature>
<feature type="binding site" evidence="1">
    <location>
        <position position="158"/>
    </location>
    <ligand>
        <name>[4Fe-4S] cluster</name>
        <dbReference type="ChEBI" id="CHEBI:49883"/>
        <note>4Fe-4S-S-AdoMet</note>
    </ligand>
</feature>
<feature type="binding site" evidence="1">
    <location>
        <position position="162"/>
    </location>
    <ligand>
        <name>[4Fe-4S] cluster</name>
        <dbReference type="ChEBI" id="CHEBI:49883"/>
        <note>4Fe-4S-S-AdoMet</note>
    </ligand>
</feature>
<feature type="binding site" evidence="1">
    <location>
        <position position="165"/>
    </location>
    <ligand>
        <name>[4Fe-4S] cluster</name>
        <dbReference type="ChEBI" id="CHEBI:49883"/>
        <note>4Fe-4S-S-AdoMet</note>
    </ligand>
</feature>
<feature type="binding site" evidence="1">
    <location>
        <begin position="223"/>
        <end position="224"/>
    </location>
    <ligand>
        <name>S-adenosyl-L-methionine</name>
        <dbReference type="ChEBI" id="CHEBI:59789"/>
    </ligand>
</feature>
<feature type="binding site" evidence="1">
    <location>
        <position position="255"/>
    </location>
    <ligand>
        <name>S-adenosyl-L-methionine</name>
        <dbReference type="ChEBI" id="CHEBI:59789"/>
    </ligand>
</feature>
<feature type="binding site" evidence="1">
    <location>
        <begin position="277"/>
        <end position="279"/>
    </location>
    <ligand>
        <name>S-adenosyl-L-methionine</name>
        <dbReference type="ChEBI" id="CHEBI:59789"/>
    </ligand>
</feature>
<feature type="binding site" evidence="1">
    <location>
        <position position="354"/>
    </location>
    <ligand>
        <name>S-adenosyl-L-methionine</name>
        <dbReference type="ChEBI" id="CHEBI:59789"/>
    </ligand>
</feature>
<feature type="disulfide bond" description="(transient)" evidence="1">
    <location>
        <begin position="151"/>
        <end position="397"/>
    </location>
</feature>
<sequence>MATASLDTARPERRAGSDPFIEKTPEVRPEAMVATGRPSLVGLTRGALRERLAAIGVPEREQRMRTGQLWHWINVRGAASFEAMTNVGKGLKAQLEEAYTLDRPEVVSEQVSRDGTRKWLLRMPPTGRHDHNRGAEIECVYIPANDRGTLCVSSQVGCTLTCSFCHTGTQRLVRNLSAQEITAQLVVARDRLGDWPGQVPPKGTFVPVDGSRFVSNIVFMGMGEPLYNVDNVVDAVGVMSDNEGLGLSRRRITVSTSGVVPQFERLGIDANAMLAISLHAVRDDLRDELVPLNRKYPIRTLLEACRNYPGVSNARRITFEYVMLKGVNDSDSEARELVRLLKGIPAKINLIPFNPWPGSRYECSDWERIERFSEIVFNAGYASPVRTPRGRDILAACGQLKSETEKLRARARLMLEDGIGAEGVYGAVDDD</sequence>
<protein>
    <recommendedName>
        <fullName evidence="1">Dual-specificity RNA methyltransferase RlmN</fullName>
        <ecNumber evidence="1">2.1.1.192</ecNumber>
    </recommendedName>
    <alternativeName>
        <fullName evidence="1">23S rRNA (adenine(2503)-C(2))-methyltransferase</fullName>
    </alternativeName>
    <alternativeName>
        <fullName evidence="1">23S rRNA m2A2503 methyltransferase</fullName>
    </alternativeName>
    <alternativeName>
        <fullName evidence="1">Ribosomal RNA large subunit methyltransferase N</fullName>
    </alternativeName>
    <alternativeName>
        <fullName evidence="1">tRNA (adenine(37)-C(2))-methyltransferase</fullName>
    </alternativeName>
    <alternativeName>
        <fullName evidence="1">tRNA m2A37 methyltransferase</fullName>
    </alternativeName>
</protein>
<organism>
    <name type="scientific">Methylobacterium sp. (strain 4-46)</name>
    <dbReference type="NCBI Taxonomy" id="426117"/>
    <lineage>
        <taxon>Bacteria</taxon>
        <taxon>Pseudomonadati</taxon>
        <taxon>Pseudomonadota</taxon>
        <taxon>Alphaproteobacteria</taxon>
        <taxon>Hyphomicrobiales</taxon>
        <taxon>Methylobacteriaceae</taxon>
        <taxon>Methylobacterium</taxon>
    </lineage>
</organism>
<keyword id="KW-0004">4Fe-4S</keyword>
<keyword id="KW-0963">Cytoplasm</keyword>
<keyword id="KW-1015">Disulfide bond</keyword>
<keyword id="KW-0408">Iron</keyword>
<keyword id="KW-0411">Iron-sulfur</keyword>
<keyword id="KW-0479">Metal-binding</keyword>
<keyword id="KW-0489">Methyltransferase</keyword>
<keyword id="KW-0698">rRNA processing</keyword>
<keyword id="KW-0949">S-adenosyl-L-methionine</keyword>
<keyword id="KW-0808">Transferase</keyword>
<keyword id="KW-0819">tRNA processing</keyword>
<proteinExistence type="inferred from homology"/>
<name>RLMN_METS4</name>
<evidence type="ECO:0000255" key="1">
    <source>
        <dbReference type="HAMAP-Rule" id="MF_01849"/>
    </source>
</evidence>
<evidence type="ECO:0000255" key="2">
    <source>
        <dbReference type="PROSITE-ProRule" id="PRU01266"/>
    </source>
</evidence>
<evidence type="ECO:0000256" key="3">
    <source>
        <dbReference type="SAM" id="MobiDB-lite"/>
    </source>
</evidence>
<comment type="function">
    <text evidence="1">Specifically methylates position 2 of adenine 2503 in 23S rRNA and position 2 of adenine 37 in tRNAs. m2A2503 modification seems to play a crucial role in the proofreading step occurring at the peptidyl transferase center and thus would serve to optimize ribosomal fidelity.</text>
</comment>
<comment type="catalytic activity">
    <reaction evidence="1">
        <text>adenosine(2503) in 23S rRNA + 2 reduced [2Fe-2S]-[ferredoxin] + 2 S-adenosyl-L-methionine = 2-methyladenosine(2503) in 23S rRNA + 5'-deoxyadenosine + L-methionine + 2 oxidized [2Fe-2S]-[ferredoxin] + S-adenosyl-L-homocysteine</text>
        <dbReference type="Rhea" id="RHEA:42916"/>
        <dbReference type="Rhea" id="RHEA-COMP:10000"/>
        <dbReference type="Rhea" id="RHEA-COMP:10001"/>
        <dbReference type="Rhea" id="RHEA-COMP:10152"/>
        <dbReference type="Rhea" id="RHEA-COMP:10282"/>
        <dbReference type="ChEBI" id="CHEBI:17319"/>
        <dbReference type="ChEBI" id="CHEBI:33737"/>
        <dbReference type="ChEBI" id="CHEBI:33738"/>
        <dbReference type="ChEBI" id="CHEBI:57844"/>
        <dbReference type="ChEBI" id="CHEBI:57856"/>
        <dbReference type="ChEBI" id="CHEBI:59789"/>
        <dbReference type="ChEBI" id="CHEBI:74411"/>
        <dbReference type="ChEBI" id="CHEBI:74497"/>
        <dbReference type="EC" id="2.1.1.192"/>
    </reaction>
</comment>
<comment type="catalytic activity">
    <reaction evidence="1">
        <text>adenosine(37) in tRNA + 2 reduced [2Fe-2S]-[ferredoxin] + 2 S-adenosyl-L-methionine = 2-methyladenosine(37) in tRNA + 5'-deoxyadenosine + L-methionine + 2 oxidized [2Fe-2S]-[ferredoxin] + S-adenosyl-L-homocysteine</text>
        <dbReference type="Rhea" id="RHEA:43332"/>
        <dbReference type="Rhea" id="RHEA-COMP:10000"/>
        <dbReference type="Rhea" id="RHEA-COMP:10001"/>
        <dbReference type="Rhea" id="RHEA-COMP:10162"/>
        <dbReference type="Rhea" id="RHEA-COMP:10485"/>
        <dbReference type="ChEBI" id="CHEBI:17319"/>
        <dbReference type="ChEBI" id="CHEBI:33737"/>
        <dbReference type="ChEBI" id="CHEBI:33738"/>
        <dbReference type="ChEBI" id="CHEBI:57844"/>
        <dbReference type="ChEBI" id="CHEBI:57856"/>
        <dbReference type="ChEBI" id="CHEBI:59789"/>
        <dbReference type="ChEBI" id="CHEBI:74411"/>
        <dbReference type="ChEBI" id="CHEBI:74497"/>
        <dbReference type="EC" id="2.1.1.192"/>
    </reaction>
</comment>
<comment type="cofactor">
    <cofactor evidence="1">
        <name>[4Fe-4S] cluster</name>
        <dbReference type="ChEBI" id="CHEBI:49883"/>
    </cofactor>
    <text evidence="1">Binds 1 [4Fe-4S] cluster. The cluster is coordinated with 3 cysteines and an exchangeable S-adenosyl-L-methionine.</text>
</comment>
<comment type="subcellular location">
    <subcellularLocation>
        <location evidence="1">Cytoplasm</location>
    </subcellularLocation>
</comment>
<comment type="miscellaneous">
    <text evidence="1">Reaction proceeds by a ping-pong mechanism involving intermediate methylation of a conserved cysteine residue.</text>
</comment>
<comment type="similarity">
    <text evidence="1">Belongs to the radical SAM superfamily. RlmN family.</text>
</comment>
<accession>B0UQR1</accession>